<evidence type="ECO:0000255" key="1">
    <source>
        <dbReference type="HAMAP-Rule" id="MF_00075"/>
    </source>
</evidence>
<sequence length="72" mass="8210">MSKEDVIEVEGKVLEPLPNAMFLVELSNGHKVLAHVSGKIRMNFIRILPGDRVTVELSPYDLSRGRIVYRFK</sequence>
<organism>
    <name type="scientific">Desulfitobacterium hafniense (strain Y51)</name>
    <dbReference type="NCBI Taxonomy" id="138119"/>
    <lineage>
        <taxon>Bacteria</taxon>
        <taxon>Bacillati</taxon>
        <taxon>Bacillota</taxon>
        <taxon>Clostridia</taxon>
        <taxon>Eubacteriales</taxon>
        <taxon>Desulfitobacteriaceae</taxon>
        <taxon>Desulfitobacterium</taxon>
    </lineage>
</organism>
<name>IF1_DESHY</name>
<comment type="function">
    <text evidence="1">One of the essential components for the initiation of protein synthesis. Stabilizes the binding of IF-2 and IF-3 on the 30S subunit to which N-formylmethionyl-tRNA(fMet) subsequently binds. Helps modulate mRNA selection, yielding the 30S pre-initiation complex (PIC). Upon addition of the 50S ribosomal subunit IF-1, IF-2 and IF-3 are released leaving the mature 70S translation initiation complex.</text>
</comment>
<comment type="subunit">
    <text evidence="1">Component of the 30S ribosomal translation pre-initiation complex which assembles on the 30S ribosome in the order IF-2 and IF-3, IF-1 and N-formylmethionyl-tRNA(fMet); mRNA recruitment can occur at any time during PIC assembly.</text>
</comment>
<comment type="subcellular location">
    <subcellularLocation>
        <location evidence="1">Cytoplasm</location>
    </subcellularLocation>
</comment>
<comment type="similarity">
    <text evidence="1">Belongs to the IF-1 family.</text>
</comment>
<dbReference type="EMBL" id="AP008230">
    <property type="protein sequence ID" value="BAE82283.1"/>
    <property type="molecule type" value="Genomic_DNA"/>
</dbReference>
<dbReference type="RefSeq" id="WP_005810121.1">
    <property type="nucleotide sequence ID" value="NC_007907.1"/>
</dbReference>
<dbReference type="SMR" id="Q250K9"/>
<dbReference type="STRING" id="138119.DSY0494"/>
<dbReference type="KEGG" id="dsy:DSY0494"/>
<dbReference type="eggNOG" id="COG0361">
    <property type="taxonomic scope" value="Bacteria"/>
</dbReference>
<dbReference type="HOGENOM" id="CLU_151267_1_0_9"/>
<dbReference type="Proteomes" id="UP000001946">
    <property type="component" value="Chromosome"/>
</dbReference>
<dbReference type="GO" id="GO:0005829">
    <property type="term" value="C:cytosol"/>
    <property type="evidence" value="ECO:0007669"/>
    <property type="project" value="TreeGrafter"/>
</dbReference>
<dbReference type="GO" id="GO:0043022">
    <property type="term" value="F:ribosome binding"/>
    <property type="evidence" value="ECO:0007669"/>
    <property type="project" value="UniProtKB-UniRule"/>
</dbReference>
<dbReference type="GO" id="GO:0019843">
    <property type="term" value="F:rRNA binding"/>
    <property type="evidence" value="ECO:0007669"/>
    <property type="project" value="UniProtKB-UniRule"/>
</dbReference>
<dbReference type="GO" id="GO:0003743">
    <property type="term" value="F:translation initiation factor activity"/>
    <property type="evidence" value="ECO:0007669"/>
    <property type="project" value="UniProtKB-UniRule"/>
</dbReference>
<dbReference type="CDD" id="cd04451">
    <property type="entry name" value="S1_IF1"/>
    <property type="match status" value="1"/>
</dbReference>
<dbReference type="FunFam" id="2.40.50.140:FF:000002">
    <property type="entry name" value="Translation initiation factor IF-1"/>
    <property type="match status" value="1"/>
</dbReference>
<dbReference type="Gene3D" id="2.40.50.140">
    <property type="entry name" value="Nucleic acid-binding proteins"/>
    <property type="match status" value="1"/>
</dbReference>
<dbReference type="HAMAP" id="MF_00075">
    <property type="entry name" value="IF_1"/>
    <property type="match status" value="1"/>
</dbReference>
<dbReference type="InterPro" id="IPR012340">
    <property type="entry name" value="NA-bd_OB-fold"/>
</dbReference>
<dbReference type="InterPro" id="IPR006196">
    <property type="entry name" value="RNA-binding_domain_S1_IF1"/>
</dbReference>
<dbReference type="InterPro" id="IPR003029">
    <property type="entry name" value="S1_domain"/>
</dbReference>
<dbReference type="InterPro" id="IPR004368">
    <property type="entry name" value="TIF_IF1"/>
</dbReference>
<dbReference type="NCBIfam" id="TIGR00008">
    <property type="entry name" value="infA"/>
    <property type="match status" value="1"/>
</dbReference>
<dbReference type="PANTHER" id="PTHR33370">
    <property type="entry name" value="TRANSLATION INITIATION FACTOR IF-1, CHLOROPLASTIC"/>
    <property type="match status" value="1"/>
</dbReference>
<dbReference type="PANTHER" id="PTHR33370:SF1">
    <property type="entry name" value="TRANSLATION INITIATION FACTOR IF-1, CHLOROPLASTIC"/>
    <property type="match status" value="1"/>
</dbReference>
<dbReference type="Pfam" id="PF01176">
    <property type="entry name" value="eIF-1a"/>
    <property type="match status" value="1"/>
</dbReference>
<dbReference type="SMART" id="SM00316">
    <property type="entry name" value="S1"/>
    <property type="match status" value="1"/>
</dbReference>
<dbReference type="SUPFAM" id="SSF50249">
    <property type="entry name" value="Nucleic acid-binding proteins"/>
    <property type="match status" value="1"/>
</dbReference>
<dbReference type="PROSITE" id="PS50832">
    <property type="entry name" value="S1_IF1_TYPE"/>
    <property type="match status" value="1"/>
</dbReference>
<accession>Q250K9</accession>
<gene>
    <name evidence="1" type="primary">infA</name>
    <name type="ordered locus">DSY0494</name>
</gene>
<feature type="chain" id="PRO_0000263796" description="Translation initiation factor IF-1">
    <location>
        <begin position="1"/>
        <end position="72"/>
    </location>
</feature>
<feature type="domain" description="S1-like" evidence="1">
    <location>
        <begin position="1"/>
        <end position="72"/>
    </location>
</feature>
<proteinExistence type="inferred from homology"/>
<reference key="1">
    <citation type="journal article" date="2006" name="J. Bacteriol.">
        <title>Complete genome sequence of the dehalorespiring bacterium Desulfitobacterium hafniense Y51 and comparison with Dehalococcoides ethenogenes 195.</title>
        <authorList>
            <person name="Nonaka H."/>
            <person name="Keresztes G."/>
            <person name="Shinoda Y."/>
            <person name="Ikenaga Y."/>
            <person name="Abe M."/>
            <person name="Naito K."/>
            <person name="Inatomi K."/>
            <person name="Furukawa K."/>
            <person name="Inui M."/>
            <person name="Yukawa H."/>
        </authorList>
    </citation>
    <scope>NUCLEOTIDE SEQUENCE [LARGE SCALE GENOMIC DNA]</scope>
    <source>
        <strain>Y51</strain>
    </source>
</reference>
<protein>
    <recommendedName>
        <fullName evidence="1">Translation initiation factor IF-1</fullName>
    </recommendedName>
</protein>
<keyword id="KW-0963">Cytoplasm</keyword>
<keyword id="KW-0396">Initiation factor</keyword>
<keyword id="KW-0648">Protein biosynthesis</keyword>
<keyword id="KW-1185">Reference proteome</keyword>
<keyword id="KW-0694">RNA-binding</keyword>
<keyword id="KW-0699">rRNA-binding</keyword>